<dbReference type="EC" id="4.2.1.9" evidence="1"/>
<dbReference type="EMBL" id="AM933172">
    <property type="protein sequence ID" value="CAR35285.1"/>
    <property type="molecule type" value="Genomic_DNA"/>
</dbReference>
<dbReference type="RefSeq" id="WP_001127431.1">
    <property type="nucleotide sequence ID" value="NC_011294.1"/>
</dbReference>
<dbReference type="SMR" id="B5QVG2"/>
<dbReference type="KEGG" id="set:SEN3710"/>
<dbReference type="HOGENOM" id="CLU_014271_4_2_6"/>
<dbReference type="UniPathway" id="UPA00047">
    <property type="reaction ID" value="UER00057"/>
</dbReference>
<dbReference type="UniPathway" id="UPA00049">
    <property type="reaction ID" value="UER00061"/>
</dbReference>
<dbReference type="Proteomes" id="UP000000613">
    <property type="component" value="Chromosome"/>
</dbReference>
<dbReference type="GO" id="GO:0005829">
    <property type="term" value="C:cytosol"/>
    <property type="evidence" value="ECO:0007669"/>
    <property type="project" value="TreeGrafter"/>
</dbReference>
<dbReference type="GO" id="GO:0051537">
    <property type="term" value="F:2 iron, 2 sulfur cluster binding"/>
    <property type="evidence" value="ECO:0007669"/>
    <property type="project" value="UniProtKB-UniRule"/>
</dbReference>
<dbReference type="GO" id="GO:0004160">
    <property type="term" value="F:dihydroxy-acid dehydratase activity"/>
    <property type="evidence" value="ECO:0007669"/>
    <property type="project" value="UniProtKB-UniRule"/>
</dbReference>
<dbReference type="GO" id="GO:0000287">
    <property type="term" value="F:magnesium ion binding"/>
    <property type="evidence" value="ECO:0007669"/>
    <property type="project" value="UniProtKB-UniRule"/>
</dbReference>
<dbReference type="GO" id="GO:0009097">
    <property type="term" value="P:isoleucine biosynthetic process"/>
    <property type="evidence" value="ECO:0007669"/>
    <property type="project" value="UniProtKB-UniRule"/>
</dbReference>
<dbReference type="GO" id="GO:0009099">
    <property type="term" value="P:L-valine biosynthetic process"/>
    <property type="evidence" value="ECO:0007669"/>
    <property type="project" value="UniProtKB-UniRule"/>
</dbReference>
<dbReference type="FunFam" id="3.50.30.80:FF:000001">
    <property type="entry name" value="Dihydroxy-acid dehydratase"/>
    <property type="match status" value="1"/>
</dbReference>
<dbReference type="Gene3D" id="3.50.30.80">
    <property type="entry name" value="IlvD/EDD C-terminal domain-like"/>
    <property type="match status" value="1"/>
</dbReference>
<dbReference type="HAMAP" id="MF_00012">
    <property type="entry name" value="IlvD"/>
    <property type="match status" value="1"/>
</dbReference>
<dbReference type="InterPro" id="IPR042096">
    <property type="entry name" value="Dihydro-acid_dehy_C"/>
</dbReference>
<dbReference type="InterPro" id="IPR004404">
    <property type="entry name" value="DihydroxyA_deHydtase"/>
</dbReference>
<dbReference type="InterPro" id="IPR020558">
    <property type="entry name" value="DiOHA_6PGluconate_deHydtase_CS"/>
</dbReference>
<dbReference type="InterPro" id="IPR056740">
    <property type="entry name" value="ILV_EDD_C"/>
</dbReference>
<dbReference type="InterPro" id="IPR000581">
    <property type="entry name" value="ILV_EDD_N"/>
</dbReference>
<dbReference type="InterPro" id="IPR037237">
    <property type="entry name" value="IlvD/EDD_N"/>
</dbReference>
<dbReference type="NCBIfam" id="TIGR00110">
    <property type="entry name" value="ilvD"/>
    <property type="match status" value="1"/>
</dbReference>
<dbReference type="NCBIfam" id="NF009103">
    <property type="entry name" value="PRK12448.1"/>
    <property type="match status" value="1"/>
</dbReference>
<dbReference type="PANTHER" id="PTHR43661">
    <property type="entry name" value="D-XYLONATE DEHYDRATASE"/>
    <property type="match status" value="1"/>
</dbReference>
<dbReference type="PANTHER" id="PTHR43661:SF3">
    <property type="entry name" value="D-XYLONATE DEHYDRATASE YAGF-RELATED"/>
    <property type="match status" value="1"/>
</dbReference>
<dbReference type="Pfam" id="PF24877">
    <property type="entry name" value="ILV_EDD_C"/>
    <property type="match status" value="1"/>
</dbReference>
<dbReference type="Pfam" id="PF00920">
    <property type="entry name" value="ILVD_EDD_N"/>
    <property type="match status" value="1"/>
</dbReference>
<dbReference type="SUPFAM" id="SSF143975">
    <property type="entry name" value="IlvD/EDD N-terminal domain-like"/>
    <property type="match status" value="1"/>
</dbReference>
<dbReference type="SUPFAM" id="SSF52016">
    <property type="entry name" value="LeuD/IlvD-like"/>
    <property type="match status" value="1"/>
</dbReference>
<dbReference type="PROSITE" id="PS00886">
    <property type="entry name" value="ILVD_EDD_1"/>
    <property type="match status" value="1"/>
</dbReference>
<dbReference type="PROSITE" id="PS00887">
    <property type="entry name" value="ILVD_EDD_2"/>
    <property type="match status" value="1"/>
</dbReference>
<comment type="function">
    <text evidence="1">Functions in the biosynthesis of branched-chain amino acids. Catalyzes the dehydration of (2R,3R)-2,3-dihydroxy-3-methylpentanoate (2,3-dihydroxy-3-methylvalerate) into 2-oxo-3-methylpentanoate (2-oxo-3-methylvalerate) and of (2R)-2,3-dihydroxy-3-methylbutanoate (2,3-dihydroxyisovalerate) into 2-oxo-3-methylbutanoate (2-oxoisovalerate), the penultimate precursor to L-isoleucine and L-valine, respectively.</text>
</comment>
<comment type="catalytic activity">
    <reaction evidence="1">
        <text>(2R)-2,3-dihydroxy-3-methylbutanoate = 3-methyl-2-oxobutanoate + H2O</text>
        <dbReference type="Rhea" id="RHEA:24809"/>
        <dbReference type="ChEBI" id="CHEBI:11851"/>
        <dbReference type="ChEBI" id="CHEBI:15377"/>
        <dbReference type="ChEBI" id="CHEBI:49072"/>
        <dbReference type="EC" id="4.2.1.9"/>
    </reaction>
    <physiologicalReaction direction="left-to-right" evidence="1">
        <dbReference type="Rhea" id="RHEA:24810"/>
    </physiologicalReaction>
</comment>
<comment type="catalytic activity">
    <reaction evidence="1">
        <text>(2R,3R)-2,3-dihydroxy-3-methylpentanoate = (S)-3-methyl-2-oxopentanoate + H2O</text>
        <dbReference type="Rhea" id="RHEA:27694"/>
        <dbReference type="ChEBI" id="CHEBI:15377"/>
        <dbReference type="ChEBI" id="CHEBI:35146"/>
        <dbReference type="ChEBI" id="CHEBI:49258"/>
        <dbReference type="EC" id="4.2.1.9"/>
    </reaction>
    <physiologicalReaction direction="left-to-right" evidence="1">
        <dbReference type="Rhea" id="RHEA:27695"/>
    </physiologicalReaction>
</comment>
<comment type="cofactor">
    <cofactor evidence="1">
        <name>[2Fe-2S] cluster</name>
        <dbReference type="ChEBI" id="CHEBI:190135"/>
    </cofactor>
    <text evidence="1">Binds 1 [2Fe-2S] cluster per subunit. This cluster acts as a Lewis acid cofactor.</text>
</comment>
<comment type="cofactor">
    <cofactor evidence="1">
        <name>Mg(2+)</name>
        <dbReference type="ChEBI" id="CHEBI:18420"/>
    </cofactor>
</comment>
<comment type="pathway">
    <text evidence="1">Amino-acid biosynthesis; L-isoleucine biosynthesis; L-isoleucine from 2-oxobutanoate: step 3/4.</text>
</comment>
<comment type="pathway">
    <text evidence="1">Amino-acid biosynthesis; L-valine biosynthesis; L-valine from pyruvate: step 3/4.</text>
</comment>
<comment type="subunit">
    <text evidence="1">Homodimer.</text>
</comment>
<comment type="similarity">
    <text evidence="1">Belongs to the IlvD/Edd family.</text>
</comment>
<name>ILVD_SALEP</name>
<feature type="chain" id="PRO_1000089407" description="Dihydroxy-acid dehydratase">
    <location>
        <begin position="1"/>
        <end position="616"/>
    </location>
</feature>
<feature type="active site" description="Proton acceptor" evidence="1">
    <location>
        <position position="517"/>
    </location>
</feature>
<feature type="binding site" evidence="1">
    <location>
        <position position="81"/>
    </location>
    <ligand>
        <name>Mg(2+)</name>
        <dbReference type="ChEBI" id="CHEBI:18420"/>
    </ligand>
</feature>
<feature type="binding site" evidence="1">
    <location>
        <position position="122"/>
    </location>
    <ligand>
        <name>[2Fe-2S] cluster</name>
        <dbReference type="ChEBI" id="CHEBI:190135"/>
    </ligand>
</feature>
<feature type="binding site" evidence="1">
    <location>
        <position position="123"/>
    </location>
    <ligand>
        <name>Mg(2+)</name>
        <dbReference type="ChEBI" id="CHEBI:18420"/>
    </ligand>
</feature>
<feature type="binding site" description="via carbamate group" evidence="1">
    <location>
        <position position="124"/>
    </location>
    <ligand>
        <name>Mg(2+)</name>
        <dbReference type="ChEBI" id="CHEBI:18420"/>
    </ligand>
</feature>
<feature type="binding site" evidence="1">
    <location>
        <position position="195"/>
    </location>
    <ligand>
        <name>[2Fe-2S] cluster</name>
        <dbReference type="ChEBI" id="CHEBI:190135"/>
    </ligand>
</feature>
<feature type="binding site" evidence="1">
    <location>
        <position position="491"/>
    </location>
    <ligand>
        <name>Mg(2+)</name>
        <dbReference type="ChEBI" id="CHEBI:18420"/>
    </ligand>
</feature>
<feature type="modified residue" description="N6-carboxylysine" evidence="1">
    <location>
        <position position="124"/>
    </location>
</feature>
<proteinExistence type="inferred from homology"/>
<gene>
    <name evidence="1" type="primary">ilvD</name>
    <name type="ordered locus">SEN3710</name>
</gene>
<keyword id="KW-0001">2Fe-2S</keyword>
<keyword id="KW-0028">Amino-acid biosynthesis</keyword>
<keyword id="KW-0100">Branched-chain amino acid biosynthesis</keyword>
<keyword id="KW-0408">Iron</keyword>
<keyword id="KW-0411">Iron-sulfur</keyword>
<keyword id="KW-0456">Lyase</keyword>
<keyword id="KW-0460">Magnesium</keyword>
<keyword id="KW-0479">Metal-binding</keyword>
<sequence>MPKYRSATTTHGRNMAGARALWRATGMTDSDFGKPIIAVVNSFTQFVPGHVHLRDLGKLVAEQIEASGGVAKEFNTIAVDDGIAMGHGGMLYSLPSRELIADSVEYMVNAHCADAMVCISNCDKITPGMLMASLRLNIPVIFVSGGPMEAGKTKLSDKIIKLDLVDAMIQGADPKVSDDQSNQVERSACPTCGSCSGMFTANSMNCLTEALGLSQPGNGSLLATHADRKQLFLNAGKRIVELTKRYYEQNDESALPRNIASKAAFENAMTLDIAMGGSTNTVLHLLAAAQEAEIDFTMSDIDKLSRKVPQLCKVAPSTQKYHMEDVHRAGGVLGILGELDRAGLLNCNVKNVLGLTLPQTLEQYDITVTQDEAVKKMFRAGPAGIRTTQAFSQDCRWDSLDDDRAAGCIRSLEYAYSKDGGLAVLYGNFAENGCIVKTAGVDDSILKFTGPAKVYESQDDAVEAILGGKVVEGDVVVIRYEGPKGGPGMQEMLYPTSFLKSMGLGKACALITDGRFSGGTSGLSIGHVSPEAASGGTIALIEDGDTIAIDIPNRSIQLQLNEAEIAARREAQEARGDKAWTPKNRQRQVSFALRAYASLATSADKGAVRDKSKLGG</sequence>
<evidence type="ECO:0000255" key="1">
    <source>
        <dbReference type="HAMAP-Rule" id="MF_00012"/>
    </source>
</evidence>
<accession>B5QVG2</accession>
<organism>
    <name type="scientific">Salmonella enteritidis PT4 (strain P125109)</name>
    <dbReference type="NCBI Taxonomy" id="550537"/>
    <lineage>
        <taxon>Bacteria</taxon>
        <taxon>Pseudomonadati</taxon>
        <taxon>Pseudomonadota</taxon>
        <taxon>Gammaproteobacteria</taxon>
        <taxon>Enterobacterales</taxon>
        <taxon>Enterobacteriaceae</taxon>
        <taxon>Salmonella</taxon>
    </lineage>
</organism>
<reference key="1">
    <citation type="journal article" date="2008" name="Genome Res.">
        <title>Comparative genome analysis of Salmonella enteritidis PT4 and Salmonella gallinarum 287/91 provides insights into evolutionary and host adaptation pathways.</title>
        <authorList>
            <person name="Thomson N.R."/>
            <person name="Clayton D.J."/>
            <person name="Windhorst D."/>
            <person name="Vernikos G."/>
            <person name="Davidson S."/>
            <person name="Churcher C."/>
            <person name="Quail M.A."/>
            <person name="Stevens M."/>
            <person name="Jones M.A."/>
            <person name="Watson M."/>
            <person name="Barron A."/>
            <person name="Layton A."/>
            <person name="Pickard D."/>
            <person name="Kingsley R.A."/>
            <person name="Bignell A."/>
            <person name="Clark L."/>
            <person name="Harris B."/>
            <person name="Ormond D."/>
            <person name="Abdellah Z."/>
            <person name="Brooks K."/>
            <person name="Cherevach I."/>
            <person name="Chillingworth T."/>
            <person name="Woodward J."/>
            <person name="Norberczak H."/>
            <person name="Lord A."/>
            <person name="Arrowsmith C."/>
            <person name="Jagels K."/>
            <person name="Moule S."/>
            <person name="Mungall K."/>
            <person name="Saunders M."/>
            <person name="Whitehead S."/>
            <person name="Chabalgoity J.A."/>
            <person name="Maskell D."/>
            <person name="Humphreys T."/>
            <person name="Roberts M."/>
            <person name="Barrow P.A."/>
            <person name="Dougan G."/>
            <person name="Parkhill J."/>
        </authorList>
    </citation>
    <scope>NUCLEOTIDE SEQUENCE [LARGE SCALE GENOMIC DNA]</scope>
    <source>
        <strain>P125109</strain>
    </source>
</reference>
<protein>
    <recommendedName>
        <fullName evidence="1">Dihydroxy-acid dehydratase</fullName>
        <shortName evidence="1">DAD</shortName>
        <ecNumber evidence="1">4.2.1.9</ecNumber>
    </recommendedName>
</protein>